<name>NIRS_PSEAE</name>
<dbReference type="EC" id="1.7.2.1"/>
<dbReference type="EC" id="1.7.99.1"/>
<dbReference type="EMBL" id="X16452">
    <property type="protein sequence ID" value="CAA34471.1"/>
    <property type="molecule type" value="Genomic_DNA"/>
</dbReference>
<dbReference type="EMBL" id="AE004091">
    <property type="protein sequence ID" value="AAG03908.1"/>
    <property type="molecule type" value="Genomic_DNA"/>
</dbReference>
<dbReference type="EMBL" id="X51631">
    <property type="protein sequence ID" value="CAA35957.1"/>
    <property type="molecule type" value="Genomic_DNA"/>
</dbReference>
<dbReference type="EMBL" id="X51319">
    <property type="protein sequence ID" value="CAA35702.1"/>
    <property type="molecule type" value="Genomic_DNA"/>
</dbReference>
<dbReference type="PIR" id="A32975">
    <property type="entry name" value="OSPSA"/>
</dbReference>
<dbReference type="RefSeq" id="NP_249210.1">
    <property type="nucleotide sequence ID" value="NC_002516.2"/>
</dbReference>
<dbReference type="RefSeq" id="WP_003111532.1">
    <property type="nucleotide sequence ID" value="NZ_QZGE01000010.1"/>
</dbReference>
<dbReference type="PDB" id="1BL9">
    <property type="method" value="X-ray"/>
    <property type="resolution" value="2.90 A"/>
    <property type="chains" value="A/B=26-568"/>
</dbReference>
<dbReference type="PDB" id="1GJQ">
    <property type="method" value="X-ray"/>
    <property type="resolution" value="2.70 A"/>
    <property type="chains" value="A/B=26-568"/>
</dbReference>
<dbReference type="PDB" id="1HZU">
    <property type="method" value="X-ray"/>
    <property type="resolution" value="2.70 A"/>
    <property type="chains" value="A=26-568"/>
</dbReference>
<dbReference type="PDB" id="1HZV">
    <property type="method" value="X-ray"/>
    <property type="resolution" value="2.83 A"/>
    <property type="chains" value="A=26-568"/>
</dbReference>
<dbReference type="PDB" id="1N15">
    <property type="method" value="X-ray"/>
    <property type="resolution" value="2.90 A"/>
    <property type="chains" value="A/B=26-568"/>
</dbReference>
<dbReference type="PDB" id="1N50">
    <property type="method" value="X-ray"/>
    <property type="resolution" value="2.90 A"/>
    <property type="chains" value="A/B=26-568"/>
</dbReference>
<dbReference type="PDB" id="1N90">
    <property type="method" value="X-ray"/>
    <property type="resolution" value="2.90 A"/>
    <property type="chains" value="A/B=26-568"/>
</dbReference>
<dbReference type="PDB" id="1NIR">
    <property type="method" value="X-ray"/>
    <property type="resolution" value="2.15 A"/>
    <property type="chains" value="A/B=26-568"/>
</dbReference>
<dbReference type="PDB" id="1NNO">
    <property type="method" value="X-ray"/>
    <property type="resolution" value="2.65 A"/>
    <property type="chains" value="A/B=26-568"/>
</dbReference>
<dbReference type="PDB" id="5GUW">
    <property type="method" value="X-ray"/>
    <property type="resolution" value="3.20 A"/>
    <property type="chains" value="M/N=1-568"/>
</dbReference>
<dbReference type="PDB" id="6TPO">
    <property type="method" value="X-ray"/>
    <property type="resolution" value="1.86 A"/>
    <property type="chains" value="A=26-568"/>
</dbReference>
<dbReference type="PDB" id="6TSI">
    <property type="method" value="X-ray"/>
    <property type="resolution" value="2.38 A"/>
    <property type="chains" value="A/B=26-568"/>
</dbReference>
<dbReference type="PDBsum" id="1BL9"/>
<dbReference type="PDBsum" id="1GJQ"/>
<dbReference type="PDBsum" id="1HZU"/>
<dbReference type="PDBsum" id="1HZV"/>
<dbReference type="PDBsum" id="1N15"/>
<dbReference type="PDBsum" id="1N50"/>
<dbReference type="PDBsum" id="1N90"/>
<dbReference type="PDBsum" id="1NIR"/>
<dbReference type="PDBsum" id="1NNO"/>
<dbReference type="PDBsum" id="5GUW"/>
<dbReference type="PDBsum" id="6TPO"/>
<dbReference type="PDBsum" id="6TSI"/>
<dbReference type="SMR" id="P24474"/>
<dbReference type="STRING" id="208964.PA0519"/>
<dbReference type="DrugBank" id="DB03317">
    <property type="generic name" value="Ferroheme C"/>
</dbReference>
<dbReference type="DrugBank" id="DB03469">
    <property type="generic name" value="Heme D"/>
</dbReference>
<dbReference type="PaxDb" id="208964-PA0519"/>
<dbReference type="GeneID" id="882217"/>
<dbReference type="KEGG" id="pae:PA0519"/>
<dbReference type="PATRIC" id="fig|208964.12.peg.549"/>
<dbReference type="PseudoCAP" id="PA0519"/>
<dbReference type="HOGENOM" id="CLU_025262_0_0_6"/>
<dbReference type="InParanoid" id="P24474"/>
<dbReference type="OrthoDB" id="5290932at2"/>
<dbReference type="PhylomeDB" id="P24474"/>
<dbReference type="BioCyc" id="PAER208964:G1FZ6-524-MONOMER"/>
<dbReference type="BRENDA" id="1.7.2.1">
    <property type="organism ID" value="5087"/>
</dbReference>
<dbReference type="EvolutionaryTrace" id="P24474"/>
<dbReference type="Proteomes" id="UP000002438">
    <property type="component" value="Chromosome"/>
</dbReference>
<dbReference type="GO" id="GO:0042597">
    <property type="term" value="C:periplasmic space"/>
    <property type="evidence" value="ECO:0007669"/>
    <property type="project" value="UniProtKB-SubCell"/>
</dbReference>
<dbReference type="GO" id="GO:0009055">
    <property type="term" value="F:electron transfer activity"/>
    <property type="evidence" value="ECO:0007669"/>
    <property type="project" value="InterPro"/>
</dbReference>
<dbReference type="GO" id="GO:0020037">
    <property type="term" value="F:heme binding"/>
    <property type="evidence" value="ECO:0007669"/>
    <property type="project" value="InterPro"/>
</dbReference>
<dbReference type="GO" id="GO:0050418">
    <property type="term" value="F:hydroxylamine reductase activity"/>
    <property type="evidence" value="ECO:0007669"/>
    <property type="project" value="UniProtKB-EC"/>
</dbReference>
<dbReference type="GO" id="GO:0046872">
    <property type="term" value="F:metal ion binding"/>
    <property type="evidence" value="ECO:0007669"/>
    <property type="project" value="UniProtKB-KW"/>
</dbReference>
<dbReference type="GO" id="GO:0050421">
    <property type="term" value="F:nitrite reductase (NO-forming) activity"/>
    <property type="evidence" value="ECO:0000304"/>
    <property type="project" value="PseudoCAP"/>
</dbReference>
<dbReference type="CDD" id="cd20779">
    <property type="entry name" value="8prop_hemeD1_NirS"/>
    <property type="match status" value="1"/>
</dbReference>
<dbReference type="FunFam" id="1.10.760.10:FF:000027">
    <property type="entry name" value="Nitrite reductase"/>
    <property type="match status" value="1"/>
</dbReference>
<dbReference type="FunFam" id="2.140.10.20:FF:000001">
    <property type="entry name" value="Nitrite reductase NirS"/>
    <property type="match status" value="1"/>
</dbReference>
<dbReference type="Gene3D" id="2.140.10.20">
    <property type="entry name" value="C-terminal (heme d1) domain of cytochrome cd1-nitrite reductase"/>
    <property type="match status" value="1"/>
</dbReference>
<dbReference type="Gene3D" id="1.10.760.10">
    <property type="entry name" value="Cytochrome c-like domain"/>
    <property type="match status" value="1"/>
</dbReference>
<dbReference type="InterPro" id="IPR009056">
    <property type="entry name" value="Cyt_c-like_dom"/>
</dbReference>
<dbReference type="InterPro" id="IPR036909">
    <property type="entry name" value="Cyt_c-like_dom_sf"/>
</dbReference>
<dbReference type="InterPro" id="IPR003143">
    <property type="entry name" value="Cyt_cd1_C_sf"/>
</dbReference>
<dbReference type="InterPro" id="IPR011048">
    <property type="entry name" value="Haem_d1_sf"/>
</dbReference>
<dbReference type="InterPro" id="IPR051200">
    <property type="entry name" value="Host-pathogen_enzymatic-act"/>
</dbReference>
<dbReference type="PANTHER" id="PTHR47197:SF3">
    <property type="entry name" value="DIHYDRO-HEME D1 DEHYDROGENASE"/>
    <property type="match status" value="1"/>
</dbReference>
<dbReference type="PANTHER" id="PTHR47197">
    <property type="entry name" value="PROTEIN NIRF"/>
    <property type="match status" value="1"/>
</dbReference>
<dbReference type="Pfam" id="PF02239">
    <property type="entry name" value="Cytochrom_D1"/>
    <property type="match status" value="1"/>
</dbReference>
<dbReference type="Pfam" id="PF13442">
    <property type="entry name" value="Cytochrome_CBB3"/>
    <property type="match status" value="1"/>
</dbReference>
<dbReference type="SUPFAM" id="SSF51004">
    <property type="entry name" value="C-terminal (heme d1) domain of cytochrome cd1-nitrite reductase"/>
    <property type="match status" value="1"/>
</dbReference>
<dbReference type="SUPFAM" id="SSF46626">
    <property type="entry name" value="Cytochrome c"/>
    <property type="match status" value="1"/>
</dbReference>
<dbReference type="PROSITE" id="PS51007">
    <property type="entry name" value="CYTC"/>
    <property type="match status" value="1"/>
</dbReference>
<proteinExistence type="evidence at protein level"/>
<keyword id="KW-0002">3D-structure</keyword>
<keyword id="KW-0903">Direct protein sequencing</keyword>
<keyword id="KW-0249">Electron transport</keyword>
<keyword id="KW-0349">Heme</keyword>
<keyword id="KW-0408">Iron</keyword>
<keyword id="KW-0479">Metal-binding</keyword>
<keyword id="KW-0560">Oxidoreductase</keyword>
<keyword id="KW-0574">Periplasm</keyword>
<keyword id="KW-1185">Reference proteome</keyword>
<keyword id="KW-0732">Signal</keyword>
<keyword id="KW-0813">Transport</keyword>
<evidence type="ECO:0000255" key="1">
    <source>
        <dbReference type="PROSITE-ProRule" id="PRU00433"/>
    </source>
</evidence>
<evidence type="ECO:0000269" key="2">
    <source>
    </source>
</evidence>
<evidence type="ECO:0000269" key="3">
    <source>
    </source>
</evidence>
<evidence type="ECO:0007744" key="4">
    <source>
        <dbReference type="PDB" id="1NIR"/>
    </source>
</evidence>
<evidence type="ECO:0007829" key="5">
    <source>
        <dbReference type="PDB" id="1HZU"/>
    </source>
</evidence>
<evidence type="ECO:0007829" key="6">
    <source>
        <dbReference type="PDB" id="1HZV"/>
    </source>
</evidence>
<evidence type="ECO:0007829" key="7">
    <source>
        <dbReference type="PDB" id="1NIR"/>
    </source>
</evidence>
<evidence type="ECO:0007829" key="8">
    <source>
        <dbReference type="PDB" id="5GUW"/>
    </source>
</evidence>
<evidence type="ECO:0007829" key="9">
    <source>
        <dbReference type="PDB" id="6TPO"/>
    </source>
</evidence>
<accession>P24474</accession>
<gene>
    <name type="primary">nirS</name>
    <name type="ordered locus">PA0519</name>
</gene>
<comment type="catalytic activity">
    <reaction>
        <text>nitric oxide + Fe(III)-[cytochrome c] + H2O = Fe(II)-[cytochrome c] + nitrite + 2 H(+)</text>
        <dbReference type="Rhea" id="RHEA:15233"/>
        <dbReference type="Rhea" id="RHEA-COMP:10350"/>
        <dbReference type="Rhea" id="RHEA-COMP:14399"/>
        <dbReference type="ChEBI" id="CHEBI:15377"/>
        <dbReference type="ChEBI" id="CHEBI:15378"/>
        <dbReference type="ChEBI" id="CHEBI:16301"/>
        <dbReference type="ChEBI" id="CHEBI:16480"/>
        <dbReference type="ChEBI" id="CHEBI:29033"/>
        <dbReference type="ChEBI" id="CHEBI:29034"/>
        <dbReference type="EC" id="1.7.2.1"/>
    </reaction>
</comment>
<comment type="catalytic activity">
    <reaction>
        <text>A + NH4(+) + H2O = hydroxylamine + AH2 + H(+)</text>
        <dbReference type="Rhea" id="RHEA:22052"/>
        <dbReference type="ChEBI" id="CHEBI:13193"/>
        <dbReference type="ChEBI" id="CHEBI:15377"/>
        <dbReference type="ChEBI" id="CHEBI:15378"/>
        <dbReference type="ChEBI" id="CHEBI:15429"/>
        <dbReference type="ChEBI" id="CHEBI:17499"/>
        <dbReference type="ChEBI" id="CHEBI:28938"/>
        <dbReference type="EC" id="1.7.99.1"/>
    </reaction>
</comment>
<comment type="cofactor">
    <cofactor evidence="3">
        <name>heme c</name>
        <dbReference type="ChEBI" id="CHEBI:61717"/>
    </cofactor>
    <text evidence="3">Binds 1 heme c group covalently per subunit.</text>
</comment>
<comment type="cofactor">
    <cofactor evidence="3">
        <name>heme</name>
        <dbReference type="ChEBI" id="CHEBI:30413"/>
    </cofactor>
    <text evidence="3">Binds 1 heme d1 group per subunit.</text>
</comment>
<comment type="subunit">
    <text>Homodimer.</text>
</comment>
<comment type="subcellular location">
    <subcellularLocation>
        <location>Periplasm</location>
    </subcellularLocation>
</comment>
<protein>
    <recommendedName>
        <fullName>Nitrite reductase</fullName>
        <ecNumber>1.7.2.1</ecNumber>
    </recommendedName>
    <alternativeName>
        <fullName>Cytochrome cd1</fullName>
    </alternativeName>
    <alternativeName>
        <fullName>Cytochrome oxidase</fullName>
    </alternativeName>
    <alternativeName>
        <fullName>Hydroxylamine reductase</fullName>
        <ecNumber>1.7.99.1</ecNumber>
    </alternativeName>
</protein>
<reference key="1">
    <citation type="journal article" date="1989" name="FEBS Lett.">
        <title>Nitrite reductase from Pseudomonas aeruginosa: sequence of the gene and the protein.</title>
        <authorList>
            <person name="Silvestrini M.C."/>
            <person name="Galeotti C.L."/>
            <person name="Gervais M."/>
            <person name="Schinina E."/>
            <person name="Barra D."/>
            <person name="Bossa F."/>
            <person name="Brunori M."/>
        </authorList>
    </citation>
    <scope>NUCLEOTIDE SEQUENCE [GENOMIC DNA]</scope>
    <scope>PROTEIN SEQUENCE OF 26-70</scope>
    <source>
        <strain>NTCC 6750</strain>
    </source>
</reference>
<reference key="2">
    <citation type="journal article" date="2000" name="Nature">
        <title>Complete genome sequence of Pseudomonas aeruginosa PAO1, an opportunistic pathogen.</title>
        <authorList>
            <person name="Stover C.K."/>
            <person name="Pham X.-Q.T."/>
            <person name="Erwin A.L."/>
            <person name="Mizoguchi S.D."/>
            <person name="Warrener P."/>
            <person name="Hickey M.J."/>
            <person name="Brinkman F.S.L."/>
            <person name="Hufnagle W.O."/>
            <person name="Kowalik D.J."/>
            <person name="Lagrou M."/>
            <person name="Garber R.L."/>
            <person name="Goltry L."/>
            <person name="Tolentino E."/>
            <person name="Westbrock-Wadman S."/>
            <person name="Yuan Y."/>
            <person name="Brody L.L."/>
            <person name="Coulter S.N."/>
            <person name="Folger K.R."/>
            <person name="Kas A."/>
            <person name="Larbig K."/>
            <person name="Lim R.M."/>
            <person name="Smith K.A."/>
            <person name="Spencer D.H."/>
            <person name="Wong G.K.-S."/>
            <person name="Wu Z."/>
            <person name="Paulsen I.T."/>
            <person name="Reizer J."/>
            <person name="Saier M.H. Jr."/>
            <person name="Hancock R.E.W."/>
            <person name="Lory S."/>
            <person name="Olson M.V."/>
        </authorList>
    </citation>
    <scope>NUCLEOTIDE SEQUENCE [LARGE SCALE GENOMIC DNA]</scope>
    <source>
        <strain>ATCC 15692 / DSM 22644 / CIP 104116 / JCM 14847 / LMG 12228 / 1C / PRS 101 / PAO1</strain>
    </source>
</reference>
<reference key="3">
    <citation type="journal article" date="1990" name="FEBS Lett.">
        <title>Cloning and sequencing of the gene encoding cytochrome c-551 from Pseudomonas aeruginosa.</title>
        <authorList>
            <person name="Arai H."/>
            <person name="Sanbongi Y."/>
            <person name="Igarashi Y."/>
            <person name="Kodama T."/>
        </authorList>
    </citation>
    <scope>NUCLEOTIDE SEQUENCE [GENOMIC DNA] OF 462-568</scope>
</reference>
<reference key="4">
    <citation type="journal article" date="1990" name="FEBS Lett.">
        <title>The structural gene for cytochrome c551 from Pseudomonas aeruginosa. The nucleotide sequence shows a location downstream of the nitrite reductase gene.</title>
        <authorList>
            <person name="Nordling M."/>
            <person name="Young S."/>
            <person name="Karlsson B.G."/>
            <person name="Lundberg L.G."/>
        </authorList>
    </citation>
    <scope>NUCLEOTIDE SEQUENCE [GENOMIC DNA] OF 462-568</scope>
    <source>
        <strain>ATCC 10145 / DSM 50071 / JCM 5962 / LMG 1242 / NBRC 12689 / NCIMB 8295 / NRRL B-771</strain>
    </source>
</reference>
<reference evidence="4" key="5">
    <citation type="journal article" date="1997" name="Structure">
        <title>N-terminal arm exchange is observed in the 2.15 A crystal structure of oxidized nitrite reductase from Pseudomonas aeruginosa.</title>
        <authorList>
            <person name="Nurizzo D."/>
            <person name="Silvestrini M.-C."/>
            <person name="Mathieu M."/>
            <person name="Cutruzzola F."/>
            <person name="Bourgeois D."/>
            <person name="Fueloep V."/>
            <person name="Hajdu J."/>
            <person name="Brunori M."/>
            <person name="Tegoni M."/>
            <person name="Cambillau C."/>
        </authorList>
    </citation>
    <scope>X-RAY CRYSTALLOGRAPHY (2.15 ANGSTROMS) OF 26-568 IN COMPLEX WITH HEME C AND HEME D1</scope>
    <scope>COFACTOR</scope>
    <source>
        <strain>NTCC 6750</strain>
    </source>
</reference>
<reference key="6">
    <citation type="journal article" date="1998" name="Biochemistry">
        <title>Conformational changes occurring upon reduction and NO binding in nitrite reductase from Pseudomonas aeruginosa.</title>
        <authorList>
            <person name="Nurizzo D."/>
            <person name="Cutruzzola F."/>
            <person name="Arese M."/>
            <person name="Bourgeois D."/>
            <person name="Brunori M."/>
            <person name="Cambillau C."/>
            <person name="Tegoni M."/>
        </authorList>
    </citation>
    <scope>X-RAY CRYSTALLOGRAPHY (2.65 ANGSTROMS)</scope>
    <source>
        <strain>NTCC 6750</strain>
    </source>
</reference>
<reference key="7">
    <citation type="journal article" date="1999" name="J. Biol. Chem.">
        <title>Does the reduction of c heme trigger the conformational change of crystalline nitrite reductase?</title>
        <authorList>
            <person name="Nurizzo D."/>
            <person name="Cutruzzola F."/>
            <person name="Arese M."/>
            <person name="Bourgeois D."/>
            <person name="Brunori M."/>
            <person name="Cambillau C."/>
            <person name="Tegoni M."/>
        </authorList>
    </citation>
    <scope>X-RAY CRYSTALLOGRAPHY (2.9 ANGSTROMS)</scope>
    <source>
        <strain>NTCC 6750</strain>
    </source>
</reference>
<reference key="8">
    <citation type="journal article" date="2001" name="Proc. Natl. Acad. Sci. U.S.A.">
        <title>The nitrite reductase from Pseudomonas aeruginosa: essential role of two active-site histidines in the catalytic and structural properties.</title>
        <authorList>
            <person name="Cutruzzola F."/>
            <person name="Brown K."/>
            <person name="Wilson E.K."/>
            <person name="Bellelli A."/>
            <person name="Arese M."/>
            <person name="Tegoni M."/>
            <person name="Cambillau C."/>
            <person name="Brunori B."/>
        </authorList>
    </citation>
    <scope>X-RAY CRYSTALLOGRAPHY (2.7 ANGSTROMS) OF H394A AND H352A MUTANTS</scope>
</reference>
<reference key="9">
    <citation type="journal article" date="2001" name="J. Mol. Biol.">
        <title>Domain swing upon His to Ala mutation in nitrite reductase of Pseudomonas aeruginosa.</title>
        <authorList>
            <person name="Brown K."/>
            <person name="Roig-Zamboni V."/>
            <person name="Cutruzzola F."/>
            <person name="Arese M."/>
            <person name="Sun W."/>
            <person name="Brunori M."/>
            <person name="Cambillau C."/>
            <person name="Tegoni M."/>
        </authorList>
    </citation>
    <scope>X-RAY CRYSTALLOGRAPHY (2.7 ANGSTROMS) OF H394A AND H352A MUTANTS</scope>
</reference>
<feature type="signal peptide" evidence="2">
    <location>
        <begin position="1"/>
        <end position="25"/>
    </location>
</feature>
<feature type="chain" id="PRO_0000006576" description="Nitrite reductase">
    <location>
        <begin position="26"/>
        <end position="568"/>
    </location>
</feature>
<feature type="domain" description="Cytochrome c" evidence="1">
    <location>
        <begin position="55"/>
        <end position="140"/>
    </location>
</feature>
<feature type="region of interest" description="N-terminal tail">
    <location>
        <begin position="26"/>
        <end position="54"/>
    </location>
</feature>
<feature type="region of interest" description="D1-heme domain">
    <location>
        <begin position="141"/>
        <end position="568"/>
    </location>
</feature>
<feature type="binding site" description="covalent" evidence="3 4">
    <location>
        <position position="72"/>
    </location>
    <ligand>
        <name>heme c</name>
        <dbReference type="ChEBI" id="CHEBI:61717"/>
    </ligand>
</feature>
<feature type="binding site" description="covalent" evidence="3 4">
    <location>
        <position position="75"/>
    </location>
    <ligand>
        <name>heme c</name>
        <dbReference type="ChEBI" id="CHEBI:61717"/>
    </ligand>
</feature>
<feature type="binding site" description="axial binding residue" evidence="3 4">
    <location>
        <position position="76"/>
    </location>
    <ligand>
        <name>heme c</name>
        <dbReference type="ChEBI" id="CHEBI:61717"/>
    </ligand>
    <ligandPart>
        <name>Fe</name>
        <dbReference type="ChEBI" id="CHEBI:18248"/>
    </ligandPart>
</feature>
<feature type="binding site" evidence="3 4">
    <location>
        <position position="96"/>
    </location>
    <ligand>
        <name>heme c</name>
        <dbReference type="ChEBI" id="CHEBI:61717"/>
    </ligand>
</feature>
<feature type="binding site" evidence="3 4">
    <location>
        <position position="109"/>
    </location>
    <ligand>
        <name>heme c</name>
        <dbReference type="ChEBI" id="CHEBI:61717"/>
    </ligand>
</feature>
<feature type="binding site" description="axial binding residue" evidence="3 4">
    <location>
        <position position="113"/>
    </location>
    <ligand>
        <name>heme c</name>
        <dbReference type="ChEBI" id="CHEBI:61717"/>
    </ligand>
    <ligandPart>
        <name>Fe</name>
        <dbReference type="ChEBI" id="CHEBI:18248"/>
    </ligandPart>
</feature>
<feature type="binding site" description="proximal binding residue" evidence="3 4">
    <location>
        <position position="207"/>
    </location>
    <ligand>
        <name>heme d1</name>
        <dbReference type="ChEBI" id="CHEBI:60549"/>
    </ligand>
    <ligandPart>
        <name>Fe</name>
        <dbReference type="ChEBI" id="CHEBI:18248"/>
    </ligandPart>
</feature>
<feature type="binding site" evidence="3 4">
    <location>
        <position position="250"/>
    </location>
    <ligand>
        <name>heme d1</name>
        <dbReference type="ChEBI" id="CHEBI:60549"/>
    </ligand>
</feature>
<feature type="binding site" evidence="3 4">
    <location>
        <position position="251"/>
    </location>
    <ligand>
        <name>heme d1</name>
        <dbReference type="ChEBI" id="CHEBI:60549"/>
    </ligand>
</feature>
<feature type="binding site" evidence="3 4">
    <location>
        <position position="270"/>
    </location>
    <ligand>
        <name>heme d1</name>
        <dbReference type="ChEBI" id="CHEBI:60549"/>
    </ligand>
</feature>
<feature type="binding site" evidence="3 4">
    <location>
        <position position="397"/>
    </location>
    <ligand>
        <name>heme d1</name>
        <dbReference type="ChEBI" id="CHEBI:60549"/>
    </ligand>
</feature>
<feature type="binding site" evidence="3 4">
    <location>
        <position position="508"/>
    </location>
    <ligand>
        <name>heme d1</name>
        <dbReference type="ChEBI" id="CHEBI:60549"/>
    </ligand>
</feature>
<feature type="helix" evidence="7">
    <location>
        <begin position="32"/>
        <end position="35"/>
    </location>
</feature>
<feature type="helix" evidence="7">
    <location>
        <begin position="44"/>
        <end position="46"/>
    </location>
</feature>
<feature type="strand" evidence="6">
    <location>
        <begin position="51"/>
        <end position="53"/>
    </location>
</feature>
<feature type="helix" evidence="9">
    <location>
        <begin position="58"/>
        <end position="71"/>
    </location>
</feature>
<feature type="helix" evidence="9">
    <location>
        <begin position="73"/>
        <end position="76"/>
    </location>
</feature>
<feature type="turn" evidence="7">
    <location>
        <begin position="77"/>
        <end position="80"/>
    </location>
</feature>
<feature type="strand" evidence="9">
    <location>
        <begin position="83"/>
        <end position="85"/>
    </location>
</feature>
<feature type="helix" evidence="9">
    <location>
        <begin position="90"/>
        <end position="96"/>
    </location>
</feature>
<feature type="helix" evidence="9">
    <location>
        <begin position="98"/>
        <end position="107"/>
    </location>
</feature>
<feature type="turn" evidence="9">
    <location>
        <begin position="110"/>
        <end position="112"/>
    </location>
</feature>
<feature type="turn" evidence="9">
    <location>
        <begin position="116"/>
        <end position="119"/>
    </location>
</feature>
<feature type="strand" evidence="9">
    <location>
        <begin position="120"/>
        <end position="122"/>
    </location>
</feature>
<feature type="helix" evidence="9">
    <location>
        <begin position="124"/>
        <end position="133"/>
    </location>
</feature>
<feature type="strand" evidence="6">
    <location>
        <begin position="134"/>
        <end position="136"/>
    </location>
</feature>
<feature type="helix" evidence="9">
    <location>
        <begin position="146"/>
        <end position="152"/>
    </location>
</feature>
<feature type="strand" evidence="9">
    <location>
        <begin position="154"/>
        <end position="157"/>
    </location>
</feature>
<feature type="helix" evidence="9">
    <location>
        <begin position="159"/>
        <end position="161"/>
    </location>
</feature>
<feature type="helix" evidence="9">
    <location>
        <begin position="172"/>
        <end position="174"/>
    </location>
</feature>
<feature type="strand" evidence="9">
    <location>
        <begin position="175"/>
        <end position="180"/>
    </location>
</feature>
<feature type="helix" evidence="9">
    <location>
        <begin position="181"/>
        <end position="183"/>
    </location>
</feature>
<feature type="strand" evidence="9">
    <location>
        <begin position="185"/>
        <end position="190"/>
    </location>
</feature>
<feature type="turn" evidence="9">
    <location>
        <begin position="191"/>
        <end position="193"/>
    </location>
</feature>
<feature type="strand" evidence="9">
    <location>
        <begin position="196"/>
        <end position="201"/>
    </location>
</feature>
<feature type="strand" evidence="9">
    <location>
        <begin position="206"/>
        <end position="211"/>
    </location>
</feature>
<feature type="strand" evidence="9">
    <location>
        <begin position="217"/>
        <end position="222"/>
    </location>
</feature>
<feature type="strand" evidence="9">
    <location>
        <begin position="225"/>
        <end position="231"/>
    </location>
</feature>
<feature type="strand" evidence="9">
    <location>
        <begin position="234"/>
        <end position="236"/>
    </location>
</feature>
<feature type="strand" evidence="9">
    <location>
        <begin position="238"/>
        <end position="244"/>
    </location>
</feature>
<feature type="strand" evidence="9">
    <location>
        <begin position="247"/>
        <end position="254"/>
    </location>
</feature>
<feature type="turn" evidence="9">
    <location>
        <begin position="261"/>
        <end position="263"/>
    </location>
</feature>
<feature type="strand" evidence="9">
    <location>
        <begin position="264"/>
        <end position="271"/>
    </location>
</feature>
<feature type="strand" evidence="9">
    <location>
        <begin position="274"/>
        <end position="279"/>
    </location>
</feature>
<feature type="turn" evidence="9">
    <location>
        <begin position="280"/>
        <end position="282"/>
    </location>
</feature>
<feature type="strand" evidence="9">
    <location>
        <begin position="285"/>
        <end position="290"/>
    </location>
</feature>
<feature type="turn" evidence="9">
    <location>
        <begin position="296"/>
        <end position="298"/>
    </location>
</feature>
<feature type="strand" evidence="9">
    <location>
        <begin position="301"/>
        <end position="303"/>
    </location>
</feature>
<feature type="strand" evidence="9">
    <location>
        <begin position="307"/>
        <end position="312"/>
    </location>
</feature>
<feature type="strand" evidence="9">
    <location>
        <begin position="314"/>
        <end position="323"/>
    </location>
</feature>
<feature type="turn" evidence="9">
    <location>
        <begin position="324"/>
        <end position="327"/>
    </location>
</feature>
<feature type="strand" evidence="9">
    <location>
        <begin position="328"/>
        <end position="333"/>
    </location>
</feature>
<feature type="strand" evidence="9">
    <location>
        <begin position="335"/>
        <end position="339"/>
    </location>
</feature>
<feature type="strand" evidence="9">
    <location>
        <begin position="341"/>
        <end position="346"/>
    </location>
</feature>
<feature type="strand" evidence="9">
    <location>
        <begin position="349"/>
        <end position="356"/>
    </location>
</feature>
<feature type="strand" evidence="9">
    <location>
        <begin position="362"/>
        <end position="367"/>
    </location>
</feature>
<feature type="helix" evidence="7">
    <location>
        <begin position="368"/>
        <end position="370"/>
    </location>
</feature>
<feature type="strand" evidence="9">
    <location>
        <begin position="371"/>
        <end position="377"/>
    </location>
</feature>
<feature type="turn" evidence="9">
    <location>
        <begin position="378"/>
        <end position="381"/>
    </location>
</feature>
<feature type="strand" evidence="9">
    <location>
        <begin position="382"/>
        <end position="388"/>
    </location>
</feature>
<feature type="strand" evidence="7">
    <location>
        <begin position="390"/>
        <end position="393"/>
    </location>
</feature>
<feature type="strand" evidence="9">
    <location>
        <begin position="399"/>
        <end position="403"/>
    </location>
</feature>
<feature type="turn" evidence="9">
    <location>
        <begin position="404"/>
        <end position="406"/>
    </location>
</feature>
<feature type="strand" evidence="9">
    <location>
        <begin position="407"/>
        <end position="413"/>
    </location>
</feature>
<feature type="turn" evidence="9">
    <location>
        <begin position="415"/>
        <end position="417"/>
    </location>
</feature>
<feature type="strand" evidence="9">
    <location>
        <begin position="419"/>
        <end position="424"/>
    </location>
</feature>
<feature type="turn" evidence="9">
    <location>
        <begin position="427"/>
        <end position="429"/>
    </location>
</feature>
<feature type="turn" evidence="9">
    <location>
        <begin position="431"/>
        <end position="433"/>
    </location>
</feature>
<feature type="strand" evidence="9">
    <location>
        <begin position="436"/>
        <end position="442"/>
    </location>
</feature>
<feature type="strand" evidence="5">
    <location>
        <begin position="444"/>
        <end position="446"/>
    </location>
</feature>
<feature type="strand" evidence="9">
    <location>
        <begin position="458"/>
        <end position="462"/>
    </location>
</feature>
<feature type="helix" evidence="9">
    <location>
        <begin position="470"/>
        <end position="473"/>
    </location>
</feature>
<feature type="strand" evidence="9">
    <location>
        <begin position="476"/>
        <end position="480"/>
    </location>
</feature>
<feature type="strand" evidence="8">
    <location>
        <begin position="483"/>
        <end position="486"/>
    </location>
</feature>
<feature type="strand" evidence="9">
    <location>
        <begin position="489"/>
        <end position="491"/>
    </location>
</feature>
<feature type="helix" evidence="9">
    <location>
        <begin position="493"/>
        <end position="497"/>
    </location>
</feature>
<feature type="strand" evidence="9">
    <location>
        <begin position="504"/>
        <end position="511"/>
    </location>
</feature>
<feature type="strand" evidence="9">
    <location>
        <begin position="515"/>
        <end position="524"/>
    </location>
</feature>
<feature type="turn" evidence="9">
    <location>
        <begin position="525"/>
        <end position="527"/>
    </location>
</feature>
<feature type="strand" evidence="9">
    <location>
        <begin position="530"/>
        <end position="536"/>
    </location>
</feature>
<feature type="turn" evidence="9">
    <location>
        <begin position="537"/>
        <end position="540"/>
    </location>
</feature>
<feature type="strand" evidence="9">
    <location>
        <begin position="541"/>
        <end position="546"/>
    </location>
</feature>
<feature type="strand" evidence="9">
    <location>
        <begin position="553"/>
        <end position="559"/>
    </location>
</feature>
<feature type="helix" evidence="9">
    <location>
        <begin position="560"/>
        <end position="564"/>
    </location>
</feature>
<organism>
    <name type="scientific">Pseudomonas aeruginosa (strain ATCC 15692 / DSM 22644 / CIP 104116 / JCM 14847 / LMG 12228 / 1C / PRS 101 / PAO1)</name>
    <dbReference type="NCBI Taxonomy" id="208964"/>
    <lineage>
        <taxon>Bacteria</taxon>
        <taxon>Pseudomonadati</taxon>
        <taxon>Pseudomonadota</taxon>
        <taxon>Gammaproteobacteria</taxon>
        <taxon>Pseudomonadales</taxon>
        <taxon>Pseudomonadaceae</taxon>
        <taxon>Pseudomonas</taxon>
    </lineage>
</organism>
<sequence length="568" mass="62653">MPFGKPLVGTLLASLTLLGLATAHAKDDMKAAEQYQGAASAVDPAHVVRTNGAPDMSESEFNEAKQIYFQRCAGCHGVLRKGATGKPLTPDITQQRGQQYLEALITYGTPLGMPNWGSSGELSKEQITLMAKYIQHTPPQPPEWGMPEMRESWKVLVKPEDRPKKQLNDLDLPNLFSVTLRDAGQIALVDGDSKKIVKVIDTGYAVHISRMSASGRYLLVIGRDARIDMIDLWAKEPTKVAEIKIGIEARSVESSKFKGYEDRYTIAGAYWPPQFAIMDGETLEPKQIVSTRGMTVDTQTYHPEPRVAAIIASHEHPEFIVNVKETGKVLLVNYKDIDNLTVTSIGAAPFLHDGGWDSSHRYFMTAANNSNKVAVIDSKDRRLSALVDVGKTPHPGRGANFVHPKYGPVWSTSHLGDGSISLIGTDPKNHPQYAWKKVAELQGQGGGSLFIKTHPKSSHLYVDTTFNPDARISQSVAVFDLKNLDAKYQVLPIAEWADLGEGAKRVVQPEYNKRGDEVWFSVWNGKNDSSALVVVDDKTLKLKAVVKDPRLITPTGKFNVYNTQHDVY</sequence>